<reference key="1">
    <citation type="journal article" date="2004" name="Environ. Microbiol.">
        <title>The genome of Desulfotalea psychrophila, a sulfate-reducing bacterium from permanently cold Arctic sediments.</title>
        <authorList>
            <person name="Rabus R."/>
            <person name="Ruepp A."/>
            <person name="Frickey T."/>
            <person name="Rattei T."/>
            <person name="Fartmann B."/>
            <person name="Stark M."/>
            <person name="Bauer M."/>
            <person name="Zibat A."/>
            <person name="Lombardot T."/>
            <person name="Becker I."/>
            <person name="Amann J."/>
            <person name="Gellner K."/>
            <person name="Teeling H."/>
            <person name="Leuschner W.D."/>
            <person name="Gloeckner F.-O."/>
            <person name="Lupas A.N."/>
            <person name="Amann R."/>
            <person name="Klenk H.-P."/>
        </authorList>
    </citation>
    <scope>NUCLEOTIDE SEQUENCE [LARGE SCALE GENOMIC DNA]</scope>
    <source>
        <strain>DSM 12343 / LSv54</strain>
    </source>
</reference>
<gene>
    <name evidence="1" type="primary">nfo</name>
    <name type="ordered locus">DP0053</name>
</gene>
<feature type="chain" id="PRO_0000190836" description="Probable endonuclease 4">
    <location>
        <begin position="1"/>
        <end position="292"/>
    </location>
</feature>
<feature type="binding site" evidence="1">
    <location>
        <position position="69"/>
    </location>
    <ligand>
        <name>Zn(2+)</name>
        <dbReference type="ChEBI" id="CHEBI:29105"/>
        <label>1</label>
    </ligand>
</feature>
<feature type="binding site" evidence="1">
    <location>
        <position position="109"/>
    </location>
    <ligand>
        <name>Zn(2+)</name>
        <dbReference type="ChEBI" id="CHEBI:29105"/>
        <label>1</label>
    </ligand>
</feature>
<feature type="binding site" evidence="1">
    <location>
        <position position="145"/>
    </location>
    <ligand>
        <name>Zn(2+)</name>
        <dbReference type="ChEBI" id="CHEBI:29105"/>
        <label>1</label>
    </ligand>
</feature>
<feature type="binding site" evidence="1">
    <location>
        <position position="145"/>
    </location>
    <ligand>
        <name>Zn(2+)</name>
        <dbReference type="ChEBI" id="CHEBI:29105"/>
        <label>2</label>
    </ligand>
</feature>
<feature type="binding site" evidence="1">
    <location>
        <position position="179"/>
    </location>
    <ligand>
        <name>Zn(2+)</name>
        <dbReference type="ChEBI" id="CHEBI:29105"/>
        <label>2</label>
    </ligand>
</feature>
<feature type="binding site" evidence="1">
    <location>
        <position position="182"/>
    </location>
    <ligand>
        <name>Zn(2+)</name>
        <dbReference type="ChEBI" id="CHEBI:29105"/>
        <label>3</label>
    </ligand>
</feature>
<feature type="binding site" evidence="1">
    <location>
        <position position="216"/>
    </location>
    <ligand>
        <name>Zn(2+)</name>
        <dbReference type="ChEBI" id="CHEBI:29105"/>
        <label>2</label>
    </ligand>
</feature>
<feature type="binding site" evidence="1">
    <location>
        <position position="229"/>
    </location>
    <ligand>
        <name>Zn(2+)</name>
        <dbReference type="ChEBI" id="CHEBI:29105"/>
        <label>3</label>
    </ligand>
</feature>
<feature type="binding site" evidence="1">
    <location>
        <position position="231"/>
    </location>
    <ligand>
        <name>Zn(2+)</name>
        <dbReference type="ChEBI" id="CHEBI:29105"/>
        <label>3</label>
    </ligand>
</feature>
<feature type="binding site" evidence="1">
    <location>
        <position position="261"/>
    </location>
    <ligand>
        <name>Zn(2+)</name>
        <dbReference type="ChEBI" id="CHEBI:29105"/>
        <label>2</label>
    </ligand>
</feature>
<dbReference type="EC" id="3.1.21.2" evidence="1"/>
<dbReference type="EMBL" id="CR522870">
    <property type="protein sequence ID" value="CAG34782.1"/>
    <property type="molecule type" value="Genomic_DNA"/>
</dbReference>
<dbReference type="RefSeq" id="WP_011187298.1">
    <property type="nucleotide sequence ID" value="NC_006138.1"/>
</dbReference>
<dbReference type="SMR" id="Q6ASE4"/>
<dbReference type="STRING" id="177439.DP0053"/>
<dbReference type="KEGG" id="dps:DP0053"/>
<dbReference type="eggNOG" id="COG0648">
    <property type="taxonomic scope" value="Bacteria"/>
</dbReference>
<dbReference type="HOGENOM" id="CLU_025885_0_4_7"/>
<dbReference type="OrthoDB" id="9805666at2"/>
<dbReference type="Proteomes" id="UP000000602">
    <property type="component" value="Chromosome"/>
</dbReference>
<dbReference type="GO" id="GO:0008833">
    <property type="term" value="F:deoxyribonuclease IV (phage-T4-induced) activity"/>
    <property type="evidence" value="ECO:0007669"/>
    <property type="project" value="UniProtKB-UniRule"/>
</dbReference>
<dbReference type="GO" id="GO:0003677">
    <property type="term" value="F:DNA binding"/>
    <property type="evidence" value="ECO:0007669"/>
    <property type="project" value="InterPro"/>
</dbReference>
<dbReference type="GO" id="GO:0003906">
    <property type="term" value="F:DNA-(apurinic or apyrimidinic site) endonuclease activity"/>
    <property type="evidence" value="ECO:0007669"/>
    <property type="project" value="TreeGrafter"/>
</dbReference>
<dbReference type="GO" id="GO:0008081">
    <property type="term" value="F:phosphoric diester hydrolase activity"/>
    <property type="evidence" value="ECO:0007669"/>
    <property type="project" value="TreeGrafter"/>
</dbReference>
<dbReference type="GO" id="GO:0008270">
    <property type="term" value="F:zinc ion binding"/>
    <property type="evidence" value="ECO:0007669"/>
    <property type="project" value="UniProtKB-UniRule"/>
</dbReference>
<dbReference type="GO" id="GO:0006284">
    <property type="term" value="P:base-excision repair"/>
    <property type="evidence" value="ECO:0007669"/>
    <property type="project" value="TreeGrafter"/>
</dbReference>
<dbReference type="CDD" id="cd00019">
    <property type="entry name" value="AP2Ec"/>
    <property type="match status" value="1"/>
</dbReference>
<dbReference type="FunFam" id="3.20.20.150:FF:000001">
    <property type="entry name" value="Probable endonuclease 4"/>
    <property type="match status" value="1"/>
</dbReference>
<dbReference type="Gene3D" id="3.20.20.150">
    <property type="entry name" value="Divalent-metal-dependent TIM barrel enzymes"/>
    <property type="match status" value="1"/>
</dbReference>
<dbReference type="HAMAP" id="MF_00152">
    <property type="entry name" value="Nfo"/>
    <property type="match status" value="1"/>
</dbReference>
<dbReference type="InterPro" id="IPR001719">
    <property type="entry name" value="AP_endonuc_2"/>
</dbReference>
<dbReference type="InterPro" id="IPR018246">
    <property type="entry name" value="AP_endonuc_F2_Zn_BS"/>
</dbReference>
<dbReference type="InterPro" id="IPR036237">
    <property type="entry name" value="Xyl_isomerase-like_sf"/>
</dbReference>
<dbReference type="InterPro" id="IPR013022">
    <property type="entry name" value="Xyl_isomerase-like_TIM-brl"/>
</dbReference>
<dbReference type="NCBIfam" id="TIGR00587">
    <property type="entry name" value="nfo"/>
    <property type="match status" value="1"/>
</dbReference>
<dbReference type="NCBIfam" id="NF002199">
    <property type="entry name" value="PRK01060.1-4"/>
    <property type="match status" value="1"/>
</dbReference>
<dbReference type="PANTHER" id="PTHR21445:SF0">
    <property type="entry name" value="APURINIC-APYRIMIDINIC ENDONUCLEASE"/>
    <property type="match status" value="1"/>
</dbReference>
<dbReference type="PANTHER" id="PTHR21445">
    <property type="entry name" value="ENDONUCLEASE IV ENDODEOXYRIBONUCLEASE IV"/>
    <property type="match status" value="1"/>
</dbReference>
<dbReference type="Pfam" id="PF01261">
    <property type="entry name" value="AP_endonuc_2"/>
    <property type="match status" value="1"/>
</dbReference>
<dbReference type="SMART" id="SM00518">
    <property type="entry name" value="AP2Ec"/>
    <property type="match status" value="1"/>
</dbReference>
<dbReference type="SUPFAM" id="SSF51658">
    <property type="entry name" value="Xylose isomerase-like"/>
    <property type="match status" value="1"/>
</dbReference>
<dbReference type="PROSITE" id="PS00729">
    <property type="entry name" value="AP_NUCLEASE_F2_1"/>
    <property type="match status" value="1"/>
</dbReference>
<dbReference type="PROSITE" id="PS00730">
    <property type="entry name" value="AP_NUCLEASE_F2_2"/>
    <property type="match status" value="1"/>
</dbReference>
<dbReference type="PROSITE" id="PS51432">
    <property type="entry name" value="AP_NUCLEASE_F2_4"/>
    <property type="match status" value="1"/>
</dbReference>
<protein>
    <recommendedName>
        <fullName evidence="1">Probable endonuclease 4</fullName>
        <ecNumber evidence="1">3.1.21.2</ecNumber>
    </recommendedName>
    <alternativeName>
        <fullName evidence="1">Endodeoxyribonuclease IV</fullName>
    </alternativeName>
    <alternativeName>
        <fullName evidence="1">Endonuclease IV</fullName>
    </alternativeName>
</protein>
<proteinExistence type="inferred from homology"/>
<accession>Q6ASE4</accession>
<name>END4_DESPS</name>
<keyword id="KW-0227">DNA damage</keyword>
<keyword id="KW-0234">DNA repair</keyword>
<keyword id="KW-0255">Endonuclease</keyword>
<keyword id="KW-0378">Hydrolase</keyword>
<keyword id="KW-0479">Metal-binding</keyword>
<keyword id="KW-0540">Nuclease</keyword>
<keyword id="KW-1185">Reference proteome</keyword>
<keyword id="KW-0862">Zinc</keyword>
<sequence>MKYIGAHVSAAGGVENAPKNAVAIGANAFALFTKNQRQWKAKPLTEESIAAFKENLTEAGIEARHVLPHDSYLINLGHPEAEALEKSRGAFMDELGRCAQLGLPLLNFHPGSHLKKIDPEACLDRIAESINLAHGSVADVITVIENTAGQGTNLGYRFEHLARIIAAVEDKSRVGVCIDTCHAFAAGYDLRTVEACEKSWAEFDRIVGFKYLRGMHLNDAKSEFFSRVDRHQSLGAGNIGWEAFRYIMKDDRFDDIPLILETVDTSLWQEEIKKLQQWSVVEWRELEKTKTS</sequence>
<comment type="function">
    <text evidence="1">Endonuclease IV plays a role in DNA repair. It cleaves phosphodiester bonds at apurinic or apyrimidinic (AP) sites, generating a 3'-hydroxyl group and a 5'-terminal sugar phosphate.</text>
</comment>
<comment type="catalytic activity">
    <reaction evidence="1">
        <text>Endonucleolytic cleavage to 5'-phosphooligonucleotide end-products.</text>
        <dbReference type="EC" id="3.1.21.2"/>
    </reaction>
</comment>
<comment type="cofactor">
    <cofactor evidence="1">
        <name>Zn(2+)</name>
        <dbReference type="ChEBI" id="CHEBI:29105"/>
    </cofactor>
    <text evidence="1">Binds 3 Zn(2+) ions.</text>
</comment>
<comment type="similarity">
    <text evidence="1">Belongs to the AP endonuclease 2 family.</text>
</comment>
<organism>
    <name type="scientific">Desulfotalea psychrophila (strain LSv54 / DSM 12343)</name>
    <dbReference type="NCBI Taxonomy" id="177439"/>
    <lineage>
        <taxon>Bacteria</taxon>
        <taxon>Pseudomonadati</taxon>
        <taxon>Thermodesulfobacteriota</taxon>
        <taxon>Desulfobulbia</taxon>
        <taxon>Desulfobulbales</taxon>
        <taxon>Desulfocapsaceae</taxon>
        <taxon>Desulfotalea</taxon>
    </lineage>
</organism>
<evidence type="ECO:0000255" key="1">
    <source>
        <dbReference type="HAMAP-Rule" id="MF_00152"/>
    </source>
</evidence>